<reference key="1">
    <citation type="journal article" date="2002" name="Nucleic Acids Res.">
        <title>Genome sequence of Shigella flexneri 2a: insights into pathogenicity through comparison with genomes of Escherichia coli K12 and O157.</title>
        <authorList>
            <person name="Jin Q."/>
            <person name="Yuan Z."/>
            <person name="Xu J."/>
            <person name="Wang Y."/>
            <person name="Shen Y."/>
            <person name="Lu W."/>
            <person name="Wang J."/>
            <person name="Liu H."/>
            <person name="Yang J."/>
            <person name="Yang F."/>
            <person name="Zhang X."/>
            <person name="Zhang J."/>
            <person name="Yang G."/>
            <person name="Wu H."/>
            <person name="Qu D."/>
            <person name="Dong J."/>
            <person name="Sun L."/>
            <person name="Xue Y."/>
            <person name="Zhao A."/>
            <person name="Gao Y."/>
            <person name="Zhu J."/>
            <person name="Kan B."/>
            <person name="Ding K."/>
            <person name="Chen S."/>
            <person name="Cheng H."/>
            <person name="Yao Z."/>
            <person name="He B."/>
            <person name="Chen R."/>
            <person name="Ma D."/>
            <person name="Qiang B."/>
            <person name="Wen Y."/>
            <person name="Hou Y."/>
            <person name="Yu J."/>
        </authorList>
    </citation>
    <scope>NUCLEOTIDE SEQUENCE [LARGE SCALE GENOMIC DNA]</scope>
    <source>
        <strain>301 / Serotype 2a</strain>
    </source>
</reference>
<reference key="2">
    <citation type="journal article" date="2003" name="Infect. Immun.">
        <title>Complete genome sequence and comparative genomics of Shigella flexneri serotype 2a strain 2457T.</title>
        <authorList>
            <person name="Wei J."/>
            <person name="Goldberg M.B."/>
            <person name="Burland V."/>
            <person name="Venkatesan M.M."/>
            <person name="Deng W."/>
            <person name="Fournier G."/>
            <person name="Mayhew G.F."/>
            <person name="Plunkett G. III"/>
            <person name="Rose D.J."/>
            <person name="Darling A."/>
            <person name="Mau B."/>
            <person name="Perna N.T."/>
            <person name="Payne S.M."/>
            <person name="Runyen-Janecky L.J."/>
            <person name="Zhou S."/>
            <person name="Schwartz D.C."/>
            <person name="Blattner F.R."/>
        </authorList>
    </citation>
    <scope>NUCLEOTIDE SEQUENCE [LARGE SCALE GENOMIC DNA]</scope>
    <source>
        <strain>ATCC 700930 / 2457T / Serotype 2a</strain>
    </source>
</reference>
<sequence length="145" mass="15950">MIALIQRVTRASVTVEGEVTGEIGAGLLVLLGVEKDDDEQKANRLCERVLGYRIFSDAEGKMNLNVQQAGGSVLVVSQFTLAADTERGMRPSFSKGASPDRAEALYDYFVERCRQQEMNTQTGRFAADMQVSLVNDGPVTFWLQV</sequence>
<organism>
    <name type="scientific">Shigella flexneri</name>
    <dbReference type="NCBI Taxonomy" id="623"/>
    <lineage>
        <taxon>Bacteria</taxon>
        <taxon>Pseudomonadati</taxon>
        <taxon>Pseudomonadota</taxon>
        <taxon>Gammaproteobacteria</taxon>
        <taxon>Enterobacterales</taxon>
        <taxon>Enterobacteriaceae</taxon>
        <taxon>Shigella</taxon>
    </lineage>
</organism>
<accession>P0A6M7</accession>
<accession>P32147</accession>
<evidence type="ECO:0000255" key="1">
    <source>
        <dbReference type="HAMAP-Rule" id="MF_00518"/>
    </source>
</evidence>
<proteinExistence type="inferred from homology"/>
<gene>
    <name evidence="1" type="primary">dtd</name>
    <name type="ordered locus">SF3959</name>
    <name type="ordered locus">S3787</name>
</gene>
<dbReference type="EC" id="3.1.1.96" evidence="1"/>
<dbReference type="EMBL" id="AE005674">
    <property type="protein sequence ID" value="AAN45394.1"/>
    <property type="molecule type" value="Genomic_DNA"/>
</dbReference>
<dbReference type="EMBL" id="AE014073">
    <property type="protein sequence ID" value="AAP18806.1"/>
    <property type="molecule type" value="Genomic_DNA"/>
</dbReference>
<dbReference type="RefSeq" id="WP_000560983.1">
    <property type="nucleotide sequence ID" value="NZ_WPGW01000092.1"/>
</dbReference>
<dbReference type="SMR" id="P0A6M7"/>
<dbReference type="STRING" id="198214.SF3959"/>
<dbReference type="PaxDb" id="198214-SF3959"/>
<dbReference type="GeneID" id="93778051"/>
<dbReference type="KEGG" id="sfl:SF3959"/>
<dbReference type="KEGG" id="sfx:S3787"/>
<dbReference type="PATRIC" id="fig|198214.7.peg.4664"/>
<dbReference type="HOGENOM" id="CLU_076901_1_0_6"/>
<dbReference type="Proteomes" id="UP000001006">
    <property type="component" value="Chromosome"/>
</dbReference>
<dbReference type="Proteomes" id="UP000002673">
    <property type="component" value="Chromosome"/>
</dbReference>
<dbReference type="GO" id="GO:0005737">
    <property type="term" value="C:cytoplasm"/>
    <property type="evidence" value="ECO:0007669"/>
    <property type="project" value="UniProtKB-SubCell"/>
</dbReference>
<dbReference type="GO" id="GO:0051500">
    <property type="term" value="F:D-tyrosyl-tRNA(Tyr) deacylase activity"/>
    <property type="evidence" value="ECO:0007669"/>
    <property type="project" value="TreeGrafter"/>
</dbReference>
<dbReference type="GO" id="GO:0106026">
    <property type="term" value="F:Gly-tRNA(Ala) deacylase activity"/>
    <property type="evidence" value="ECO:0007669"/>
    <property type="project" value="UniProtKB-UniRule"/>
</dbReference>
<dbReference type="GO" id="GO:0043908">
    <property type="term" value="F:Ser(Gly)-tRNA(Ala) hydrolase activity"/>
    <property type="evidence" value="ECO:0007669"/>
    <property type="project" value="UniProtKB-UniRule"/>
</dbReference>
<dbReference type="GO" id="GO:0000049">
    <property type="term" value="F:tRNA binding"/>
    <property type="evidence" value="ECO:0007669"/>
    <property type="project" value="UniProtKB-UniRule"/>
</dbReference>
<dbReference type="GO" id="GO:0019478">
    <property type="term" value="P:D-amino acid catabolic process"/>
    <property type="evidence" value="ECO:0007669"/>
    <property type="project" value="UniProtKB-UniRule"/>
</dbReference>
<dbReference type="CDD" id="cd00563">
    <property type="entry name" value="Dtyr_deacylase"/>
    <property type="match status" value="1"/>
</dbReference>
<dbReference type="FunFam" id="3.50.80.10:FF:000001">
    <property type="entry name" value="D-aminoacyl-tRNA deacylase"/>
    <property type="match status" value="1"/>
</dbReference>
<dbReference type="Gene3D" id="3.50.80.10">
    <property type="entry name" value="D-tyrosyl-tRNA(Tyr) deacylase"/>
    <property type="match status" value="1"/>
</dbReference>
<dbReference type="HAMAP" id="MF_00518">
    <property type="entry name" value="Deacylase_Dtd"/>
    <property type="match status" value="1"/>
</dbReference>
<dbReference type="InterPro" id="IPR003732">
    <property type="entry name" value="Daa-tRNA_deacyls_DTD"/>
</dbReference>
<dbReference type="InterPro" id="IPR023509">
    <property type="entry name" value="DTD-like_sf"/>
</dbReference>
<dbReference type="NCBIfam" id="TIGR00256">
    <property type="entry name" value="D-aminoacyl-tRNA deacylase"/>
    <property type="match status" value="1"/>
</dbReference>
<dbReference type="PANTHER" id="PTHR10472:SF5">
    <property type="entry name" value="D-AMINOACYL-TRNA DEACYLASE 1"/>
    <property type="match status" value="1"/>
</dbReference>
<dbReference type="PANTHER" id="PTHR10472">
    <property type="entry name" value="D-TYROSYL-TRNA TYR DEACYLASE"/>
    <property type="match status" value="1"/>
</dbReference>
<dbReference type="Pfam" id="PF02580">
    <property type="entry name" value="Tyr_Deacylase"/>
    <property type="match status" value="1"/>
</dbReference>
<dbReference type="SUPFAM" id="SSF69500">
    <property type="entry name" value="DTD-like"/>
    <property type="match status" value="1"/>
</dbReference>
<keyword id="KW-0963">Cytoplasm</keyword>
<keyword id="KW-0378">Hydrolase</keyword>
<keyword id="KW-1185">Reference proteome</keyword>
<keyword id="KW-0694">RNA-binding</keyword>
<keyword id="KW-0820">tRNA-binding</keyword>
<comment type="function">
    <text evidence="1">An aminoacyl-tRNA editing enzyme that deacylates mischarged D-aminoacyl-tRNAs. Also deacylates mischarged glycyl-tRNA(Ala), protecting cells against glycine mischarging by AlaRS. Acts via tRNA-based rather than protein-based catalysis; rejects L-amino acids rather than detecting D-amino acids in the active site. By recycling D-aminoacyl-tRNA to D-amino acids and free tRNA molecules, this enzyme counteracts the toxicity associated with the formation of D-aminoacyl-tRNA entities in vivo and helps enforce protein L-homochirality.</text>
</comment>
<comment type="catalytic activity">
    <reaction evidence="1">
        <text>glycyl-tRNA(Ala) + H2O = tRNA(Ala) + glycine + H(+)</text>
        <dbReference type="Rhea" id="RHEA:53744"/>
        <dbReference type="Rhea" id="RHEA-COMP:9657"/>
        <dbReference type="Rhea" id="RHEA-COMP:13640"/>
        <dbReference type="ChEBI" id="CHEBI:15377"/>
        <dbReference type="ChEBI" id="CHEBI:15378"/>
        <dbReference type="ChEBI" id="CHEBI:57305"/>
        <dbReference type="ChEBI" id="CHEBI:78442"/>
        <dbReference type="ChEBI" id="CHEBI:78522"/>
        <dbReference type="EC" id="3.1.1.96"/>
    </reaction>
</comment>
<comment type="catalytic activity">
    <reaction evidence="1">
        <text>a D-aminoacyl-tRNA + H2O = a tRNA + a D-alpha-amino acid + H(+)</text>
        <dbReference type="Rhea" id="RHEA:13953"/>
        <dbReference type="Rhea" id="RHEA-COMP:10123"/>
        <dbReference type="Rhea" id="RHEA-COMP:10124"/>
        <dbReference type="ChEBI" id="CHEBI:15377"/>
        <dbReference type="ChEBI" id="CHEBI:15378"/>
        <dbReference type="ChEBI" id="CHEBI:59871"/>
        <dbReference type="ChEBI" id="CHEBI:78442"/>
        <dbReference type="ChEBI" id="CHEBI:79333"/>
        <dbReference type="EC" id="3.1.1.96"/>
    </reaction>
</comment>
<comment type="subunit">
    <text evidence="1">Homodimer.</text>
</comment>
<comment type="subcellular location">
    <subcellularLocation>
        <location evidence="1">Cytoplasm</location>
    </subcellularLocation>
</comment>
<comment type="domain">
    <text evidence="1">A Gly-cisPro motif from one monomer fits into the active site of the other monomer to allow specific chiral rejection of L-amino acids.</text>
</comment>
<comment type="similarity">
    <text evidence="1">Belongs to the DTD family.</text>
</comment>
<name>DTD_SHIFL</name>
<protein>
    <recommendedName>
        <fullName evidence="1">D-aminoacyl-tRNA deacylase</fullName>
        <shortName evidence="1">DTD</shortName>
        <ecNumber evidence="1">3.1.1.96</ecNumber>
    </recommendedName>
    <alternativeName>
        <fullName evidence="1">Gly-tRNA(Ala) deacylase</fullName>
    </alternativeName>
</protein>
<feature type="chain" id="PRO_0000164583" description="D-aminoacyl-tRNA deacylase">
    <location>
        <begin position="1"/>
        <end position="145"/>
    </location>
</feature>
<feature type="short sequence motif" description="Gly-cisPro motif, important for rejection of L-amino acids" evidence="1">
    <location>
        <begin position="137"/>
        <end position="138"/>
    </location>
</feature>